<sequence length="97" mass="11323">MKKRSSRKLAQVIGRKTGNYFPASIEGETKKEHKHHYSTASKEKESLRKRAKEFDVLVHSLLDKHVPQNSDQVLIFTYQNGFVETDFHNFGRYSVKL</sequence>
<name>LTUB_CHLTR</name>
<feature type="chain" id="PRO_0000084521" description="Late transcription unit B protein">
    <location>
        <begin position="1"/>
        <end position="97"/>
    </location>
</feature>
<feature type="region of interest" description="Disordered" evidence="1">
    <location>
        <begin position="24"/>
        <end position="45"/>
    </location>
</feature>
<gene>
    <name type="primary">ltuB</name>
    <name type="ordered locus">CT_080</name>
</gene>
<proteinExistence type="predicted"/>
<organism>
    <name type="scientific">Chlamydia trachomatis serovar D (strain ATCC VR-885 / DSM 19411 / UW-3/Cx)</name>
    <dbReference type="NCBI Taxonomy" id="272561"/>
    <lineage>
        <taxon>Bacteria</taxon>
        <taxon>Pseudomonadati</taxon>
        <taxon>Chlamydiota</taxon>
        <taxon>Chlamydiia</taxon>
        <taxon>Chlamydiales</taxon>
        <taxon>Chlamydiaceae</taxon>
        <taxon>Chlamydia/Chlamydophila group</taxon>
        <taxon>Chlamydia</taxon>
    </lineage>
</organism>
<protein>
    <recommendedName>
        <fullName>Late transcription unit B protein</fullName>
    </recommendedName>
</protein>
<reference key="1">
    <citation type="journal article" date="1995" name="J. Bacteriol.">
        <title>Characterization of late gene promoters of Chlamydia trachomatis.</title>
        <authorList>
            <person name="Fahr M.J."/>
            <person name="Douglas A.L."/>
            <person name="Xia W."/>
            <person name="Hatch T.P."/>
        </authorList>
    </citation>
    <scope>NUCLEOTIDE SEQUENCE [GENOMIC DNA]</scope>
    <source>
        <strain>L2/434/Bu</strain>
    </source>
</reference>
<reference key="2">
    <citation type="journal article" date="1998" name="Science">
        <title>Genome sequence of an obligate intracellular pathogen of humans: Chlamydia trachomatis.</title>
        <authorList>
            <person name="Stephens R.S."/>
            <person name="Kalman S."/>
            <person name="Lammel C.J."/>
            <person name="Fan J."/>
            <person name="Marathe R."/>
            <person name="Aravind L."/>
            <person name="Mitchell W.P."/>
            <person name="Olinger L."/>
            <person name="Tatusov R.L."/>
            <person name="Zhao Q."/>
            <person name="Koonin E.V."/>
            <person name="Davis R.W."/>
        </authorList>
    </citation>
    <scope>NUCLEOTIDE SEQUENCE [LARGE SCALE GENOMIC DNA]</scope>
    <source>
        <strain>ATCC VR-885 / DSM 19411 / UW-3/Cx</strain>
    </source>
</reference>
<evidence type="ECO:0000256" key="1">
    <source>
        <dbReference type="SAM" id="MobiDB-lite"/>
    </source>
</evidence>
<dbReference type="EMBL" id="L40838">
    <property type="protein sequence ID" value="AAA75630.1"/>
    <property type="molecule type" value="Genomic_DNA"/>
</dbReference>
<dbReference type="EMBL" id="AE001273">
    <property type="protein sequence ID" value="AAC67671.1"/>
    <property type="molecule type" value="Genomic_DNA"/>
</dbReference>
<dbReference type="PIR" id="I40736">
    <property type="entry name" value="I40736"/>
</dbReference>
<dbReference type="RefSeq" id="NP_219583.1">
    <property type="nucleotide sequence ID" value="NC_000117.1"/>
</dbReference>
<dbReference type="RefSeq" id="WP_009871429.1">
    <property type="nucleotide sequence ID" value="NC_000117.1"/>
</dbReference>
<dbReference type="STRING" id="272561.CT_080"/>
<dbReference type="EnsemblBacteria" id="AAC67671">
    <property type="protein sequence ID" value="AAC67671"/>
    <property type="gene ID" value="CT_080"/>
</dbReference>
<dbReference type="GeneID" id="884137"/>
<dbReference type="KEGG" id="ctr:CT_080"/>
<dbReference type="PATRIC" id="fig|272561.5.peg.89"/>
<dbReference type="HOGENOM" id="CLU_182837_0_0_0"/>
<dbReference type="InParanoid" id="Q46404"/>
<dbReference type="OrthoDB" id="19032at2"/>
<dbReference type="Proteomes" id="UP000000431">
    <property type="component" value="Chromosome"/>
</dbReference>
<dbReference type="InterPro" id="IPR020502">
    <property type="entry name" value="LtuB"/>
</dbReference>
<dbReference type="Pfam" id="PF17455">
    <property type="entry name" value="LtuB"/>
    <property type="match status" value="1"/>
</dbReference>
<keyword id="KW-1185">Reference proteome</keyword>
<accession>Q46404</accession>